<comment type="function">
    <text evidence="1">DNA-dependent RNA polymerase catalyzes the transcription of DNA into RNA using the four ribonucleoside triphosphates as substrates.</text>
</comment>
<comment type="catalytic activity">
    <reaction evidence="1">
        <text>RNA(n) + a ribonucleoside 5'-triphosphate = RNA(n+1) + diphosphate</text>
        <dbReference type="Rhea" id="RHEA:21248"/>
        <dbReference type="Rhea" id="RHEA-COMP:14527"/>
        <dbReference type="Rhea" id="RHEA-COMP:17342"/>
        <dbReference type="ChEBI" id="CHEBI:33019"/>
        <dbReference type="ChEBI" id="CHEBI:61557"/>
        <dbReference type="ChEBI" id="CHEBI:140395"/>
        <dbReference type="EC" id="2.7.7.6"/>
    </reaction>
</comment>
<comment type="cofactor">
    <cofactor evidence="1">
        <name>Mg(2+)</name>
        <dbReference type="ChEBI" id="CHEBI:18420"/>
    </cofactor>
    <text evidence="1">Binds 1 Mg(2+) ion per subunit.</text>
</comment>
<comment type="cofactor">
    <cofactor evidence="1">
        <name>Zn(2+)</name>
        <dbReference type="ChEBI" id="CHEBI:29105"/>
    </cofactor>
    <text evidence="1">Binds 2 Zn(2+) ions per subunit.</text>
</comment>
<comment type="subunit">
    <text evidence="1">The RNAP catalytic core consists of 2 alpha, 1 beta, 1 beta' and 1 omega subunit. When a sigma factor is associated with the core the holoenzyme is formed, which can initiate transcription.</text>
</comment>
<comment type="similarity">
    <text evidence="1">Belongs to the RNA polymerase beta' chain family.</text>
</comment>
<evidence type="ECO:0000255" key="1">
    <source>
        <dbReference type="HAMAP-Rule" id="MF_01322"/>
    </source>
</evidence>
<protein>
    <recommendedName>
        <fullName evidence="1">DNA-directed RNA polymerase subunit beta'</fullName>
        <shortName evidence="1">RNAP subunit beta'</shortName>
        <ecNumber evidence="1">2.7.7.6</ecNumber>
    </recommendedName>
    <alternativeName>
        <fullName evidence="1">RNA polymerase subunit beta'</fullName>
    </alternativeName>
    <alternativeName>
        <fullName evidence="1">Transcriptase subunit beta'</fullName>
    </alternativeName>
</protein>
<reference key="1">
    <citation type="journal article" date="2008" name="DNA Res.">
        <title>The whole-genome sequencing of the obligate intracellular bacterium Orientia tsutsugamushi revealed massive gene amplification during reductive genome evolution.</title>
        <authorList>
            <person name="Nakayama K."/>
            <person name="Yamashita A."/>
            <person name="Kurokawa K."/>
            <person name="Morimoto T."/>
            <person name="Ogawa M."/>
            <person name="Fukuhara M."/>
            <person name="Urakami H."/>
            <person name="Ohnishi M."/>
            <person name="Uchiyama I."/>
            <person name="Ogura Y."/>
            <person name="Ooka T."/>
            <person name="Oshima K."/>
            <person name="Tamura A."/>
            <person name="Hattori M."/>
            <person name="Hayashi T."/>
        </authorList>
    </citation>
    <scope>NUCLEOTIDE SEQUENCE [LARGE SCALE GENOMIC DNA]</scope>
    <source>
        <strain>Ikeda</strain>
    </source>
</reference>
<keyword id="KW-0240">DNA-directed RNA polymerase</keyword>
<keyword id="KW-0460">Magnesium</keyword>
<keyword id="KW-0479">Metal-binding</keyword>
<keyword id="KW-0548">Nucleotidyltransferase</keyword>
<keyword id="KW-0804">Transcription</keyword>
<keyword id="KW-0808">Transferase</keyword>
<keyword id="KW-0862">Zinc</keyword>
<accession>B3CV54</accession>
<gene>
    <name evidence="1" type="primary">rpoC</name>
    <name type="ordered locus">OTT_1793</name>
</gene>
<sequence length="1396" mass="154837">MVDITNFFKKTNKADSSQAFNRVRINIASPEQIRSWSYGEVTKPETINYRTFKPEKDGLFCAKIFGPVKDYECLCGKYKRMKYRGIVCEKCGVEVTTSKVRRERMGHIELASPIAHIWFVRSLPSRISILLDMNLKDLERVIYFEAYIVMDPGLSPLHKGDLLTEEMLQQAQNEYGEDNFIVGIGAEAIRTLLAELDLKSLRNALQEEVNNVINSDFKRKKILRRLKLIEDFIGSGNKPEWMIVTVLPIIPPELRPLVMLDAGRFASSDLNELYRRLINRNNRLKYLKKEEDGVPGIVLRNEQRMVQLSADTLFDNGKRGKAVKNSNKRPFKSLSDMLKGKQGRFRQNLLGKRVDYSGRSVIVVGPELKLHQCGLPKQMALELFKPFVYAELERCGIATTIKAAKRIVELGTPDVWNALAKVIKHHPVLLNRAPTLHCLSIQAFEPVLIEDKAIQLHPLVCTAFNADFDGDQMAVHVPLSTEAQLEARVLMMSTNNILSPANGRPIIVPDKDIVLGLYYLTLSIDGEVGEGRLFGSMAEIHHALFNKVVSLHSKIKFRKYIINADGDKVMALVNTTPGRLILGELLPDGDSISFDVVNKVMTKKGISAIVDMVYRYYGQKATVVFADKLMKLGFKYACMSGISFGMDDMIVPETKSKHVNDTLLEVQEFERQYSEGLITSGEKYNKVIDAWSRYTDRVANDMMKGIAAGDQTSVGLTNQERLNSIFMMADSEARSSVTQIKQLIGSKGLIAKASGEIIDRPILSNFCEGLTVFECFIGIPGTRKGLADTAVKTKVSGHLSRKLSESAHGYFVKREDCGTTNGLIITAVVEGGVIVVTLAEQVLGRVAVSNVYCPVTKVLILQQGEMIDEYKVELINTAGINSIKVRSVLTCELQEGVCAKCYGRDLSTGKLVAIGTAVGIVAAQSIGEPGTQLTMRTFHIGGAATRGVEASSFEAIVDGRVKIINPNFVVNSNNKSVIMSRSCEVILADNVGQEITRYKAQYGSILLVTDGQEVTKGTALVVWDPYAMPIVTEKSGYVMFKDMIDGVSVKDIIDESTGIVNRVIIEPKQGRGEVVLRPRICLLDQNKQPLTLSNGLEAEYFLPVNSILSVEEGVNVSAGDILARIPREFAGTKDITGGLPRVIELFEARKPKNHAVIAEIDGCVKFGKDYKSKRRLILQPNDESHEPIEYILPKGRHVTVNEGDVVKKGDMLIEGSPVLQDILKVMGVEALGLYIINEIQAVYRLQGVKIDNKHIEVIITRMLQKVEITDSGDSNFVIEEKVNKRAVINTNKKLKAKGLREAQYRPILQGITKASLQTESFISAASFQETTRVLTEAAIAGKVDKLEGLKENVIVGQTIPAGTGFYINEIKKIARQRDKEIIAARDAELQENNTEA</sequence>
<name>RPOC_ORITI</name>
<dbReference type="EC" id="2.7.7.6" evidence="1"/>
<dbReference type="EMBL" id="AP008981">
    <property type="protein sequence ID" value="BAG41251.1"/>
    <property type="molecule type" value="Genomic_DNA"/>
</dbReference>
<dbReference type="RefSeq" id="WP_012462209.1">
    <property type="nucleotide sequence ID" value="NC_010793.1"/>
</dbReference>
<dbReference type="SMR" id="B3CV54"/>
<dbReference type="KEGG" id="ott:OTT_1793"/>
<dbReference type="HOGENOM" id="CLU_000524_3_1_5"/>
<dbReference type="OrthoDB" id="9815296at2"/>
<dbReference type="Proteomes" id="UP000001033">
    <property type="component" value="Chromosome"/>
</dbReference>
<dbReference type="GO" id="GO:0000428">
    <property type="term" value="C:DNA-directed RNA polymerase complex"/>
    <property type="evidence" value="ECO:0007669"/>
    <property type="project" value="UniProtKB-KW"/>
</dbReference>
<dbReference type="GO" id="GO:0003677">
    <property type="term" value="F:DNA binding"/>
    <property type="evidence" value="ECO:0007669"/>
    <property type="project" value="UniProtKB-UniRule"/>
</dbReference>
<dbReference type="GO" id="GO:0003899">
    <property type="term" value="F:DNA-directed RNA polymerase activity"/>
    <property type="evidence" value="ECO:0007669"/>
    <property type="project" value="UniProtKB-UniRule"/>
</dbReference>
<dbReference type="GO" id="GO:0000287">
    <property type="term" value="F:magnesium ion binding"/>
    <property type="evidence" value="ECO:0007669"/>
    <property type="project" value="UniProtKB-UniRule"/>
</dbReference>
<dbReference type="GO" id="GO:0008270">
    <property type="term" value="F:zinc ion binding"/>
    <property type="evidence" value="ECO:0007669"/>
    <property type="project" value="UniProtKB-UniRule"/>
</dbReference>
<dbReference type="GO" id="GO:0006351">
    <property type="term" value="P:DNA-templated transcription"/>
    <property type="evidence" value="ECO:0007669"/>
    <property type="project" value="UniProtKB-UniRule"/>
</dbReference>
<dbReference type="CDD" id="cd02655">
    <property type="entry name" value="RNAP_beta'_C"/>
    <property type="match status" value="1"/>
</dbReference>
<dbReference type="CDD" id="cd01609">
    <property type="entry name" value="RNAP_beta'_N"/>
    <property type="match status" value="1"/>
</dbReference>
<dbReference type="FunFam" id="1.10.150.390:FF:000002">
    <property type="entry name" value="DNA-directed RNA polymerase subunit beta"/>
    <property type="match status" value="1"/>
</dbReference>
<dbReference type="Gene3D" id="1.10.132.30">
    <property type="match status" value="1"/>
</dbReference>
<dbReference type="Gene3D" id="1.10.150.390">
    <property type="match status" value="1"/>
</dbReference>
<dbReference type="Gene3D" id="1.10.1790.20">
    <property type="match status" value="1"/>
</dbReference>
<dbReference type="Gene3D" id="1.10.40.90">
    <property type="match status" value="1"/>
</dbReference>
<dbReference type="Gene3D" id="2.40.40.20">
    <property type="match status" value="1"/>
</dbReference>
<dbReference type="Gene3D" id="2.40.50.100">
    <property type="match status" value="3"/>
</dbReference>
<dbReference type="Gene3D" id="4.10.860.120">
    <property type="entry name" value="RNA polymerase II, clamp domain"/>
    <property type="match status" value="1"/>
</dbReference>
<dbReference type="Gene3D" id="1.10.274.100">
    <property type="entry name" value="RNA polymerase Rpb1, domain 3"/>
    <property type="match status" value="2"/>
</dbReference>
<dbReference type="HAMAP" id="MF_01322">
    <property type="entry name" value="RNApol_bact_RpoC"/>
    <property type="match status" value="1"/>
</dbReference>
<dbReference type="InterPro" id="IPR045867">
    <property type="entry name" value="DNA-dir_RpoC_beta_prime"/>
</dbReference>
<dbReference type="InterPro" id="IPR012754">
    <property type="entry name" value="DNA-dir_RpoC_beta_prime_bact"/>
</dbReference>
<dbReference type="InterPro" id="IPR000722">
    <property type="entry name" value="RNA_pol_asu"/>
</dbReference>
<dbReference type="InterPro" id="IPR006592">
    <property type="entry name" value="RNA_pol_N"/>
</dbReference>
<dbReference type="InterPro" id="IPR007080">
    <property type="entry name" value="RNA_pol_Rpb1_1"/>
</dbReference>
<dbReference type="InterPro" id="IPR007066">
    <property type="entry name" value="RNA_pol_Rpb1_3"/>
</dbReference>
<dbReference type="InterPro" id="IPR042102">
    <property type="entry name" value="RNA_pol_Rpb1_3_sf"/>
</dbReference>
<dbReference type="InterPro" id="IPR007083">
    <property type="entry name" value="RNA_pol_Rpb1_4"/>
</dbReference>
<dbReference type="InterPro" id="IPR007081">
    <property type="entry name" value="RNA_pol_Rpb1_5"/>
</dbReference>
<dbReference type="InterPro" id="IPR044893">
    <property type="entry name" value="RNA_pol_Rpb1_clamp_domain"/>
</dbReference>
<dbReference type="InterPro" id="IPR038120">
    <property type="entry name" value="Rpb1_funnel_sf"/>
</dbReference>
<dbReference type="NCBIfam" id="TIGR02386">
    <property type="entry name" value="rpoC_TIGR"/>
    <property type="match status" value="1"/>
</dbReference>
<dbReference type="PANTHER" id="PTHR19376">
    <property type="entry name" value="DNA-DIRECTED RNA POLYMERASE"/>
    <property type="match status" value="1"/>
</dbReference>
<dbReference type="PANTHER" id="PTHR19376:SF54">
    <property type="entry name" value="DNA-DIRECTED RNA POLYMERASE SUBUNIT BETA"/>
    <property type="match status" value="1"/>
</dbReference>
<dbReference type="Pfam" id="PF04997">
    <property type="entry name" value="RNA_pol_Rpb1_1"/>
    <property type="match status" value="1"/>
</dbReference>
<dbReference type="Pfam" id="PF00623">
    <property type="entry name" value="RNA_pol_Rpb1_2"/>
    <property type="match status" value="2"/>
</dbReference>
<dbReference type="Pfam" id="PF04983">
    <property type="entry name" value="RNA_pol_Rpb1_3"/>
    <property type="match status" value="1"/>
</dbReference>
<dbReference type="Pfam" id="PF05000">
    <property type="entry name" value="RNA_pol_Rpb1_4"/>
    <property type="match status" value="1"/>
</dbReference>
<dbReference type="Pfam" id="PF04998">
    <property type="entry name" value="RNA_pol_Rpb1_5"/>
    <property type="match status" value="1"/>
</dbReference>
<dbReference type="SMART" id="SM00663">
    <property type="entry name" value="RPOLA_N"/>
    <property type="match status" value="1"/>
</dbReference>
<dbReference type="SUPFAM" id="SSF64484">
    <property type="entry name" value="beta and beta-prime subunits of DNA dependent RNA-polymerase"/>
    <property type="match status" value="1"/>
</dbReference>
<proteinExistence type="inferred from homology"/>
<organism>
    <name type="scientific">Orientia tsutsugamushi (strain Ikeda)</name>
    <name type="common">Rickettsia tsutsugamushi</name>
    <dbReference type="NCBI Taxonomy" id="334380"/>
    <lineage>
        <taxon>Bacteria</taxon>
        <taxon>Pseudomonadati</taxon>
        <taxon>Pseudomonadota</taxon>
        <taxon>Alphaproteobacteria</taxon>
        <taxon>Rickettsiales</taxon>
        <taxon>Rickettsiaceae</taxon>
        <taxon>Rickettsieae</taxon>
        <taxon>Orientia</taxon>
    </lineage>
</organism>
<feature type="chain" id="PRO_0000353399" description="DNA-directed RNA polymerase subunit beta'">
    <location>
        <begin position="1"/>
        <end position="1396"/>
    </location>
</feature>
<feature type="binding site" evidence="1">
    <location>
        <position position="73"/>
    </location>
    <ligand>
        <name>Zn(2+)</name>
        <dbReference type="ChEBI" id="CHEBI:29105"/>
        <label>1</label>
    </ligand>
</feature>
<feature type="binding site" evidence="1">
    <location>
        <position position="75"/>
    </location>
    <ligand>
        <name>Zn(2+)</name>
        <dbReference type="ChEBI" id="CHEBI:29105"/>
        <label>1</label>
    </ligand>
</feature>
<feature type="binding site" evidence="1">
    <location>
        <position position="88"/>
    </location>
    <ligand>
        <name>Zn(2+)</name>
        <dbReference type="ChEBI" id="CHEBI:29105"/>
        <label>1</label>
    </ligand>
</feature>
<feature type="binding site" evidence="1">
    <location>
        <position position="91"/>
    </location>
    <ligand>
        <name>Zn(2+)</name>
        <dbReference type="ChEBI" id="CHEBI:29105"/>
        <label>1</label>
    </ligand>
</feature>
<feature type="binding site" evidence="1">
    <location>
        <position position="467"/>
    </location>
    <ligand>
        <name>Mg(2+)</name>
        <dbReference type="ChEBI" id="CHEBI:18420"/>
    </ligand>
</feature>
<feature type="binding site" evidence="1">
    <location>
        <position position="469"/>
    </location>
    <ligand>
        <name>Mg(2+)</name>
        <dbReference type="ChEBI" id="CHEBI:18420"/>
    </ligand>
</feature>
<feature type="binding site" evidence="1">
    <location>
        <position position="471"/>
    </location>
    <ligand>
        <name>Mg(2+)</name>
        <dbReference type="ChEBI" id="CHEBI:18420"/>
    </ligand>
</feature>
<feature type="binding site" evidence="1">
    <location>
        <position position="817"/>
    </location>
    <ligand>
        <name>Zn(2+)</name>
        <dbReference type="ChEBI" id="CHEBI:29105"/>
        <label>2</label>
    </ligand>
</feature>
<feature type="binding site" evidence="1">
    <location>
        <position position="891"/>
    </location>
    <ligand>
        <name>Zn(2+)</name>
        <dbReference type="ChEBI" id="CHEBI:29105"/>
        <label>2</label>
    </ligand>
</feature>
<feature type="binding site" evidence="1">
    <location>
        <position position="898"/>
    </location>
    <ligand>
        <name>Zn(2+)</name>
        <dbReference type="ChEBI" id="CHEBI:29105"/>
        <label>2</label>
    </ligand>
</feature>
<feature type="binding site" evidence="1">
    <location>
        <position position="901"/>
    </location>
    <ligand>
        <name>Zn(2+)</name>
        <dbReference type="ChEBI" id="CHEBI:29105"/>
        <label>2</label>
    </ligand>
</feature>